<feature type="chain" id="PRO_0000262919" description="Large ribosomal subunit protein uL30">
    <location>
        <begin position="1"/>
        <end position="247"/>
    </location>
</feature>
<feature type="repeat" description="1">
    <location>
        <begin position="7"/>
        <end position="17"/>
    </location>
</feature>
<feature type="repeat" description="2">
    <location>
        <begin position="18"/>
        <end position="29"/>
    </location>
</feature>
<feature type="repeat" description="3">
    <location>
        <begin position="30"/>
        <end position="41"/>
    </location>
</feature>
<feature type="repeat" description="4">
    <location>
        <begin position="42"/>
        <end position="53"/>
    </location>
</feature>
<feature type="region of interest" description="4 X 12 AA tandem repeats">
    <location>
        <begin position="7"/>
        <end position="53"/>
    </location>
</feature>
<feature type="modified residue" description="N-acetylmethionine" evidence="2">
    <location>
        <position position="1"/>
    </location>
</feature>
<feature type="modified residue" description="Phosphothreonine" evidence="2">
    <location>
        <position position="16"/>
    </location>
</feature>
<feature type="modified residue" description="N6-acetyllysine" evidence="2">
    <location>
        <position position="123"/>
    </location>
</feature>
<feature type="modified residue" description="N6-succinyllysine" evidence="1">
    <location>
        <position position="126"/>
    </location>
</feature>
<feature type="modified residue" description="Phosphotyrosine" evidence="2">
    <location>
        <position position="138"/>
    </location>
</feature>
<accession>Q4R506</accession>
<reference key="1">
    <citation type="submission" date="2005-06" db="EMBL/GenBank/DDBJ databases">
        <title>DNA sequences of macaque genes expressed in brain or testis and its evolutionary implications.</title>
        <authorList>
            <consortium name="International consortium for macaque cDNA sequencing and analysis"/>
        </authorList>
    </citation>
    <scope>NUCLEOTIDE SEQUENCE [LARGE SCALE MRNA]</scope>
    <source>
        <tissue>Frontal cortex</tissue>
    </source>
</reference>
<sequence length="247" mass="29009">MEGAEEKKKVPAVPETLKKKRRNFAELKIKRLRKKFAQKMLRKARRKLIYEKAKHYHKEYRQMYRTEIRMARMARKAGNFYVPAEPKLAFVIRIRGINGVSPKVRKVLQLLRLRQIFNGTFVKLNKASINMLRIVEPYIAWGYPNLKSVNELIYKRGYGKINKKRIALTDNALIARSLGKYGIICMEDLIHEICTVGKRFKEANNFLWPFKLSSPRGGMKKKTTHFVEGGDAGNREDQINRLIRRMN</sequence>
<comment type="function">
    <text evidence="2">Component of the large ribosomal subunit. The ribosome is a large ribonucleoprotein complex responsible for the synthesis of proteins in the cell. Binds to G-rich structures in 28S rRNA and in mRNAs. Plays a regulatory role in the translation apparatus; inhibits cell-free translation of mRNAs.</text>
</comment>
<comment type="subunit">
    <text evidence="2">Component of the large ribosomal subunit. Homodimer. Interacts with DHX33.</text>
</comment>
<comment type="subcellular location">
    <subcellularLocation>
        <location evidence="2">Cytoplasm</location>
    </subcellularLocation>
</comment>
<comment type="similarity">
    <text evidence="3">Belongs to the universal ribosomal protein uL30 family.</text>
</comment>
<dbReference type="EMBL" id="AB169738">
    <property type="protein sequence ID" value="BAE01819.1"/>
    <property type="molecule type" value="mRNA"/>
</dbReference>
<dbReference type="RefSeq" id="NP_001271527.1">
    <property type="nucleotide sequence ID" value="NM_001284598.1"/>
</dbReference>
<dbReference type="SMR" id="Q4R506"/>
<dbReference type="STRING" id="9541.ENSMFAP00000044217"/>
<dbReference type="eggNOG" id="KOG3184">
    <property type="taxonomic scope" value="Eukaryota"/>
</dbReference>
<dbReference type="Proteomes" id="UP000233100">
    <property type="component" value="Unplaced"/>
</dbReference>
<dbReference type="GO" id="GO:0022625">
    <property type="term" value="C:cytosolic large ribosomal subunit"/>
    <property type="evidence" value="ECO:0007669"/>
    <property type="project" value="TreeGrafter"/>
</dbReference>
<dbReference type="GO" id="GO:0003723">
    <property type="term" value="F:RNA binding"/>
    <property type="evidence" value="ECO:0007669"/>
    <property type="project" value="UniProtKB-KW"/>
</dbReference>
<dbReference type="GO" id="GO:0003735">
    <property type="term" value="F:structural constituent of ribosome"/>
    <property type="evidence" value="ECO:0007669"/>
    <property type="project" value="InterPro"/>
</dbReference>
<dbReference type="GO" id="GO:0000463">
    <property type="term" value="P:maturation of LSU-rRNA from tricistronic rRNA transcript (SSU-rRNA, 5.8S rRNA, LSU-rRNA)"/>
    <property type="evidence" value="ECO:0007669"/>
    <property type="project" value="InterPro"/>
</dbReference>
<dbReference type="CDD" id="cd01657">
    <property type="entry name" value="Ribosomal_L7_archeal_euk"/>
    <property type="match status" value="1"/>
</dbReference>
<dbReference type="FunFam" id="3.30.1390.20:FF:000002">
    <property type="entry name" value="60S ribosomal protein L7"/>
    <property type="match status" value="1"/>
</dbReference>
<dbReference type="FunFam" id="3.30.1390.20:FF:000003">
    <property type="entry name" value="60S ribosomal protein L7"/>
    <property type="match status" value="1"/>
</dbReference>
<dbReference type="Gene3D" id="3.30.1390.20">
    <property type="entry name" value="Ribosomal protein L30, ferredoxin-like fold domain"/>
    <property type="match status" value="2"/>
</dbReference>
<dbReference type="InterPro" id="IPR036919">
    <property type="entry name" value="Ribo_uL30_ferredoxin-like_sf"/>
</dbReference>
<dbReference type="InterPro" id="IPR039699">
    <property type="entry name" value="Ribosomal_uL30"/>
</dbReference>
<dbReference type="InterPro" id="IPR018038">
    <property type="entry name" value="Ribosomal_uL30_CS"/>
</dbReference>
<dbReference type="InterPro" id="IPR005998">
    <property type="entry name" value="Ribosomal_uL30_euk"/>
</dbReference>
<dbReference type="InterPro" id="IPR035808">
    <property type="entry name" value="Ribosomal_uL30_euk_arc"/>
</dbReference>
<dbReference type="InterPro" id="IPR016082">
    <property type="entry name" value="Ribosomal_uL30_ferredoxin-like"/>
</dbReference>
<dbReference type="InterPro" id="IPR012988">
    <property type="entry name" value="Ribosomal_uL30_N_euk"/>
</dbReference>
<dbReference type="NCBIfam" id="TIGR01310">
    <property type="entry name" value="uL30_euk"/>
    <property type="match status" value="1"/>
</dbReference>
<dbReference type="PANTHER" id="PTHR11524">
    <property type="entry name" value="60S RIBOSOMAL PROTEIN L7"/>
    <property type="match status" value="1"/>
</dbReference>
<dbReference type="PANTHER" id="PTHR11524:SF12">
    <property type="entry name" value="LARGE RIBOSOMAL SUBUNIT PROTEIN UL30"/>
    <property type="match status" value="1"/>
</dbReference>
<dbReference type="Pfam" id="PF00327">
    <property type="entry name" value="Ribosomal_L30"/>
    <property type="match status" value="1"/>
</dbReference>
<dbReference type="Pfam" id="PF08079">
    <property type="entry name" value="Ribosomal_L30_N"/>
    <property type="match status" value="1"/>
</dbReference>
<dbReference type="SUPFAM" id="SSF55129">
    <property type="entry name" value="Ribosomal protein L30p/L7e"/>
    <property type="match status" value="1"/>
</dbReference>
<dbReference type="PROSITE" id="PS00634">
    <property type="entry name" value="RIBOSOMAL_L30"/>
    <property type="match status" value="1"/>
</dbReference>
<proteinExistence type="evidence at transcript level"/>
<gene>
    <name type="primary">RPL7</name>
    <name type="ORF">QflA-14483</name>
</gene>
<evidence type="ECO:0000250" key="1">
    <source>
        <dbReference type="UniProtKB" id="P14148"/>
    </source>
</evidence>
<evidence type="ECO:0000250" key="2">
    <source>
        <dbReference type="UniProtKB" id="P18124"/>
    </source>
</evidence>
<evidence type="ECO:0000305" key="3"/>
<name>RL7_MACFA</name>
<keyword id="KW-0007">Acetylation</keyword>
<keyword id="KW-0963">Cytoplasm</keyword>
<keyword id="KW-0597">Phosphoprotein</keyword>
<keyword id="KW-1185">Reference proteome</keyword>
<keyword id="KW-0677">Repeat</keyword>
<keyword id="KW-0687">Ribonucleoprotein</keyword>
<keyword id="KW-0689">Ribosomal protein</keyword>
<keyword id="KW-0694">RNA-binding</keyword>
<organism>
    <name type="scientific">Macaca fascicularis</name>
    <name type="common">Crab-eating macaque</name>
    <name type="synonym">Cynomolgus monkey</name>
    <dbReference type="NCBI Taxonomy" id="9541"/>
    <lineage>
        <taxon>Eukaryota</taxon>
        <taxon>Metazoa</taxon>
        <taxon>Chordata</taxon>
        <taxon>Craniata</taxon>
        <taxon>Vertebrata</taxon>
        <taxon>Euteleostomi</taxon>
        <taxon>Mammalia</taxon>
        <taxon>Eutheria</taxon>
        <taxon>Euarchontoglires</taxon>
        <taxon>Primates</taxon>
        <taxon>Haplorrhini</taxon>
        <taxon>Catarrhini</taxon>
        <taxon>Cercopithecidae</taxon>
        <taxon>Cercopithecinae</taxon>
        <taxon>Macaca</taxon>
    </lineage>
</organism>
<protein>
    <recommendedName>
        <fullName evidence="3">Large ribosomal subunit protein uL30</fullName>
    </recommendedName>
    <alternativeName>
        <fullName>60S ribosomal protein L7</fullName>
    </alternativeName>
</protein>